<evidence type="ECO:0000255" key="1"/>
<evidence type="ECO:0000256" key="2">
    <source>
        <dbReference type="SAM" id="MobiDB-lite"/>
    </source>
</evidence>
<evidence type="ECO:0000269" key="3">
    <source>
    </source>
</evidence>
<evidence type="ECO:0000305" key="4"/>
<dbReference type="EMBL" id="M33556">
    <property type="protein sequence ID" value="AAA34725.1"/>
    <property type="molecule type" value="Genomic_DNA"/>
</dbReference>
<dbReference type="EMBL" id="Z49821">
    <property type="protein sequence ID" value="CAA89981.1"/>
    <property type="molecule type" value="Genomic_DNA"/>
</dbReference>
<dbReference type="EMBL" id="Z75244">
    <property type="protein sequence ID" value="CAA99659.1"/>
    <property type="molecule type" value="Genomic_DNA"/>
</dbReference>
<dbReference type="EMBL" id="BK006948">
    <property type="protein sequence ID" value="DAA11097.1"/>
    <property type="molecule type" value="Genomic_DNA"/>
</dbReference>
<dbReference type="PIR" id="S62066">
    <property type="entry name" value="BVBYK5"/>
</dbReference>
<dbReference type="RefSeq" id="NP_014981.1">
    <property type="nucleotide sequence ID" value="NM_001183756.1"/>
</dbReference>
<dbReference type="SMR" id="P22023"/>
<dbReference type="BioGRID" id="34719">
    <property type="interactions" value="257"/>
</dbReference>
<dbReference type="DIP" id="DIP-5326N"/>
<dbReference type="FunCoup" id="P22023">
    <property type="interactions" value="615"/>
</dbReference>
<dbReference type="IntAct" id="P22023">
    <property type="interactions" value="1"/>
</dbReference>
<dbReference type="MINT" id="P22023"/>
<dbReference type="STRING" id="4932.YOR336W"/>
<dbReference type="CAZy" id="GT24">
    <property type="family name" value="Glycosyltransferase Family 24"/>
</dbReference>
<dbReference type="GlyCosmos" id="P22023">
    <property type="glycosylation" value="11 sites, No reported glycans"/>
</dbReference>
<dbReference type="GlyGen" id="P22023">
    <property type="glycosylation" value="11 sites"/>
</dbReference>
<dbReference type="iPTMnet" id="P22023"/>
<dbReference type="PaxDb" id="4932-YOR336W"/>
<dbReference type="PeptideAtlas" id="P22023"/>
<dbReference type="EnsemblFungi" id="YOR336W_mRNA">
    <property type="protein sequence ID" value="YOR336W"/>
    <property type="gene ID" value="YOR336W"/>
</dbReference>
<dbReference type="GeneID" id="854514"/>
<dbReference type="KEGG" id="sce:YOR336W"/>
<dbReference type="AGR" id="SGD:S000005863"/>
<dbReference type="SGD" id="S000005863">
    <property type="gene designation" value="KRE5"/>
</dbReference>
<dbReference type="VEuPathDB" id="FungiDB:YOR336W"/>
<dbReference type="eggNOG" id="KOG1879">
    <property type="taxonomic scope" value="Eukaryota"/>
</dbReference>
<dbReference type="GeneTree" id="ENSGT00390000004600"/>
<dbReference type="HOGENOM" id="CLU_002668_1_0_1"/>
<dbReference type="InParanoid" id="P22023"/>
<dbReference type="OMA" id="FIWRSTC"/>
<dbReference type="OrthoDB" id="27683at2759"/>
<dbReference type="BioCyc" id="YEAST:G3O-33811-MONOMER"/>
<dbReference type="BioGRID-ORCS" id="854514">
    <property type="hits" value="6 hits in 10 CRISPR screens"/>
</dbReference>
<dbReference type="PRO" id="PR:P22023"/>
<dbReference type="Proteomes" id="UP000002311">
    <property type="component" value="Chromosome XV"/>
</dbReference>
<dbReference type="RNAct" id="P22023">
    <property type="molecule type" value="protein"/>
</dbReference>
<dbReference type="GO" id="GO:0005783">
    <property type="term" value="C:endoplasmic reticulum"/>
    <property type="evidence" value="ECO:0007005"/>
    <property type="project" value="SGD"/>
</dbReference>
<dbReference type="GO" id="GO:0005788">
    <property type="term" value="C:endoplasmic reticulum lumen"/>
    <property type="evidence" value="ECO:0007669"/>
    <property type="project" value="UniProtKB-SubCell"/>
</dbReference>
<dbReference type="GO" id="GO:0003980">
    <property type="term" value="F:UDP-glucose:glycoprotein glucosyltransferase activity"/>
    <property type="evidence" value="ECO:0000314"/>
    <property type="project" value="SGD"/>
</dbReference>
<dbReference type="GO" id="GO:0051082">
    <property type="term" value="F:unfolded protein binding"/>
    <property type="evidence" value="ECO:0000318"/>
    <property type="project" value="GO_Central"/>
</dbReference>
<dbReference type="GO" id="GO:0071555">
    <property type="term" value="P:cell wall organization"/>
    <property type="evidence" value="ECO:0007669"/>
    <property type="project" value="UniProtKB-KW"/>
</dbReference>
<dbReference type="GO" id="GO:0070880">
    <property type="term" value="P:fungal-type cell wall beta-glucan biosynthetic process"/>
    <property type="evidence" value="ECO:0000315"/>
    <property type="project" value="SGD"/>
</dbReference>
<dbReference type="GO" id="GO:0018279">
    <property type="term" value="P:protein N-linked glycosylation via asparagine"/>
    <property type="evidence" value="ECO:0000318"/>
    <property type="project" value="GO_Central"/>
</dbReference>
<dbReference type="InterPro" id="IPR040497">
    <property type="entry name" value="Glyco_transf_24"/>
</dbReference>
<dbReference type="InterPro" id="IPR009448">
    <property type="entry name" value="UDP-g_GGtrans"/>
</dbReference>
<dbReference type="InterPro" id="IPR040694">
    <property type="entry name" value="UGGT_TRXL_2"/>
</dbReference>
<dbReference type="InterPro" id="IPR040692">
    <property type="entry name" value="UGGT_TRXL_3"/>
</dbReference>
<dbReference type="PANTHER" id="PTHR11226">
    <property type="entry name" value="UDP-GLUCOSE GLYCOPROTEIN:GLUCOSYLTRANSFERASE"/>
    <property type="match status" value="1"/>
</dbReference>
<dbReference type="PANTHER" id="PTHR11226:SF0">
    <property type="entry name" value="UDP-GLUCOSE:GLYCOPROTEIN GLUCOSYLTRANSFERASE"/>
    <property type="match status" value="1"/>
</dbReference>
<dbReference type="Pfam" id="PF18404">
    <property type="entry name" value="Glyco_transf_24"/>
    <property type="match status" value="1"/>
</dbReference>
<dbReference type="Pfam" id="PF18401">
    <property type="entry name" value="Thioredoxin_13"/>
    <property type="match status" value="1"/>
</dbReference>
<dbReference type="Pfam" id="PF18402">
    <property type="entry name" value="Thioredoxin_14"/>
    <property type="match status" value="1"/>
</dbReference>
<dbReference type="PROSITE" id="PS00014">
    <property type="entry name" value="ER_TARGET"/>
    <property type="match status" value="1"/>
</dbReference>
<comment type="function">
    <text>Required for (1-&gt;6)-beta-D-glucan synthesis and normal cell growth.</text>
</comment>
<comment type="subcellular location">
    <subcellularLocation>
        <location>Endoplasmic reticulum lumen</location>
    </subcellularLocation>
</comment>
<comment type="miscellaneous">
    <text evidence="3">Present with 815 molecules/cell in log phase SD medium.</text>
</comment>
<comment type="similarity">
    <text evidence="4">To D.melanogaster UGGG.</text>
</comment>
<sequence>MRLLALVLLLLCAPLRAWTYSLRYGIPESAQVWSILVHLLGDVDNQLLTNLYPLVTGLDDEIDIQENLVALTSNVLRERYDKEDVADLLELYASLYPMGMIQHDISSNAEQDDANSSYFVLNGNRYEKPDDVFYLKSKDLTIQQKVPDVDVIQPYDVVIGTNSEAPILILYGCPTVIDSDFEEFNRNLFMEAMNGEGKFRFIWRSTCSLDGKSVEYPLTHPLEITLQNGSRMSSIPQLKKILYTVPKEILVGADNDDQLHDLEPEELRELDLRVTSLISEFYQYKKDITATLNFTKSIVNNFPLISKQLIKVSSVNKDIITSNEELNSKGFDYNMLGLYINGQNWKITSLTPYNLLTALKTEYQSLLKITNLLQELEPSKCILDSKFLLNKFSQFSLGKLQNLQPIKMDLHTIPGFSESVIYFNDIESDPQYDELVNSVQAFFDKSKFGELPEIKQNWSEIIFVIDFARLEDSEVKEALGGLVRAVNVVSQGYPQRVGLLPFSSDSDKSVVNKIYELKNSTDNLTELKSFLETMLLADGLSANAKHSKHIPVPDVFHLLDELQIDETSIIINGEIYPFRKNAWNYLIAKVIKKDTEFIRKELSNSSPKNKQISVRDLLHYKSANLRHNKYTPNYFADSVYSSVNNTALESVCSERIGYYTKNEEYNLLHTITLVDDFGSIHALKRLRNLLHTSFVGVRIRIIHVGDISDIWYQLRGSLSQKDPIGSINTFIDALKLKKVKSHTYKKSGLNQLGLHKWLPDIPLFELQKGSFIALNGRFIHLDQNEVPETEHFEAIIKREALRTIDSVFALDLLFPGFSQEIINPDLIEMISSILTRLFYQGTHIYNNGIDYTTESSLPRMDLSEFFRPNNLTMFEDGKSASIDLLLILDPLEERTQMILSLVEQFRPLKFVNIQVILMPTLELNIVPIRRIYVDDADIVKSITSEDSRSDPEVDIEMDVPNSFIVDNNYRIKKLLIELHSFSSKTVLSTGNIDGMGGVCLALVDSAGNIIDKTTTMKTFGYGQFHTDKFLKGCYIKSCDSRYTVQSFSTDGHPDFIPSDSLDILSYNPQKIAVKISEEPTHEEEYEEGRNNDTIINIFTILESGPDEEERYMQMILSILSKCPETQKVNFFILDQPFISDTLRKSCEYINSSDEMRGNVIFLNYEWPQWLRPQRFSSRRRDVSRFLFLDVLLPQNISKVLYMSPTEVPLDPFDIFQFQGLKRAPLGLFRMSGDGYWKEGYWEKMLRENNLEFYSTEPAFLVNLERFRELDAGDKYRIHYQRISTDAMSLVNIGQDLVNNLQLEVPIRFLKGSYKKKLVINDECVSEWKKKINKFASSPGDEDVPGESVSSKYQDSDNAAPLHDEL</sequence>
<protein>
    <recommendedName>
        <fullName>Killer toxin-resistance protein 5</fullName>
    </recommendedName>
</protein>
<gene>
    <name type="primary">KRE5</name>
    <name type="ordered locus">YOR336W</name>
</gene>
<proteinExistence type="evidence at protein level"/>
<name>KRE5_YEAST</name>
<reference key="1">
    <citation type="journal article" date="1990" name="Mol. Cell. Biol.">
        <title>The yeast KRE5 gene encodes a probable endoplasmic reticulum protein required for (1--&gt;6)-beta-D-glucan synthesis and normal cell growth.</title>
        <authorList>
            <person name="Meaden P."/>
            <person name="Hill K."/>
            <person name="Wagner J."/>
            <person name="Slipetz D."/>
            <person name="Sommer S.S."/>
            <person name="Bussey H."/>
        </authorList>
    </citation>
    <scope>NUCLEOTIDE SEQUENCE [GENOMIC DNA]</scope>
</reference>
<reference key="2">
    <citation type="journal article" date="1996" name="Yeast">
        <title>Sequence of 29 kb around the PDR10 locus on the right arm of Saccharomyces cerevisiae chromosome XV: similarity to part of chromosome I.</title>
        <authorList>
            <person name="Parle-McDermott A.G."/>
            <person name="Hand N.J."/>
            <person name="Goulding S.E."/>
            <person name="Wolfe K.H."/>
        </authorList>
    </citation>
    <scope>NUCLEOTIDE SEQUENCE [GENOMIC DNA]</scope>
</reference>
<reference key="3">
    <citation type="journal article" date="1997" name="Nature">
        <title>The nucleotide sequence of Saccharomyces cerevisiae chromosome XV.</title>
        <authorList>
            <person name="Dujon B."/>
            <person name="Albermann K."/>
            <person name="Aldea M."/>
            <person name="Alexandraki D."/>
            <person name="Ansorge W."/>
            <person name="Arino J."/>
            <person name="Benes V."/>
            <person name="Bohn C."/>
            <person name="Bolotin-Fukuhara M."/>
            <person name="Bordonne R."/>
            <person name="Boyer J."/>
            <person name="Camasses A."/>
            <person name="Casamayor A."/>
            <person name="Casas C."/>
            <person name="Cheret G."/>
            <person name="Cziepluch C."/>
            <person name="Daignan-Fornier B."/>
            <person name="Dang V.-D."/>
            <person name="de Haan M."/>
            <person name="Delius H."/>
            <person name="Durand P."/>
            <person name="Fairhead C."/>
            <person name="Feldmann H."/>
            <person name="Gaillon L."/>
            <person name="Galisson F."/>
            <person name="Gamo F.-J."/>
            <person name="Gancedo C."/>
            <person name="Goffeau A."/>
            <person name="Goulding S.E."/>
            <person name="Grivell L.A."/>
            <person name="Habbig B."/>
            <person name="Hand N.J."/>
            <person name="Hani J."/>
            <person name="Hattenhorst U."/>
            <person name="Hebling U."/>
            <person name="Hernando Y."/>
            <person name="Herrero E."/>
            <person name="Heumann K."/>
            <person name="Hiesel R."/>
            <person name="Hilger F."/>
            <person name="Hofmann B."/>
            <person name="Hollenberg C.P."/>
            <person name="Hughes B."/>
            <person name="Jauniaux J.-C."/>
            <person name="Kalogeropoulos A."/>
            <person name="Katsoulou C."/>
            <person name="Kordes E."/>
            <person name="Lafuente M.J."/>
            <person name="Landt O."/>
            <person name="Louis E.J."/>
            <person name="Maarse A.C."/>
            <person name="Madania A."/>
            <person name="Mannhaupt G."/>
            <person name="Marck C."/>
            <person name="Martin R.P."/>
            <person name="Mewes H.-W."/>
            <person name="Michaux G."/>
            <person name="Paces V."/>
            <person name="Parle-McDermott A.G."/>
            <person name="Pearson B.M."/>
            <person name="Perrin A."/>
            <person name="Pettersson B."/>
            <person name="Poch O."/>
            <person name="Pohl T.M."/>
            <person name="Poirey R."/>
            <person name="Portetelle D."/>
            <person name="Pujol A."/>
            <person name="Purnelle B."/>
            <person name="Ramezani Rad M."/>
            <person name="Rechmann S."/>
            <person name="Schwager C."/>
            <person name="Schweizer M."/>
            <person name="Sor F."/>
            <person name="Sterky F."/>
            <person name="Tarassov I.A."/>
            <person name="Teodoru C."/>
            <person name="Tettelin H."/>
            <person name="Thierry A."/>
            <person name="Tobiasch E."/>
            <person name="Tzermia M."/>
            <person name="Uhlen M."/>
            <person name="Unseld M."/>
            <person name="Valens M."/>
            <person name="Vandenbol M."/>
            <person name="Vetter I."/>
            <person name="Vlcek C."/>
            <person name="Voet M."/>
            <person name="Volckaert G."/>
            <person name="Voss H."/>
            <person name="Wambutt R."/>
            <person name="Wedler H."/>
            <person name="Wiemann S."/>
            <person name="Winsor B."/>
            <person name="Wolfe K.H."/>
            <person name="Zollner A."/>
            <person name="Zumstein E."/>
            <person name="Kleine K."/>
        </authorList>
    </citation>
    <scope>NUCLEOTIDE SEQUENCE [LARGE SCALE GENOMIC DNA]</scope>
    <source>
        <strain>ATCC 204508 / S288c</strain>
    </source>
</reference>
<reference key="4">
    <citation type="journal article" date="2014" name="G3 (Bethesda)">
        <title>The reference genome sequence of Saccharomyces cerevisiae: Then and now.</title>
        <authorList>
            <person name="Engel S.R."/>
            <person name="Dietrich F.S."/>
            <person name="Fisk D.G."/>
            <person name="Binkley G."/>
            <person name="Balakrishnan R."/>
            <person name="Costanzo M.C."/>
            <person name="Dwight S.S."/>
            <person name="Hitz B.C."/>
            <person name="Karra K."/>
            <person name="Nash R.S."/>
            <person name="Weng S."/>
            <person name="Wong E.D."/>
            <person name="Lloyd P."/>
            <person name="Skrzypek M.S."/>
            <person name="Miyasato S.R."/>
            <person name="Simison M."/>
            <person name="Cherry J.M."/>
        </authorList>
    </citation>
    <scope>GENOME REANNOTATION</scope>
    <source>
        <strain>ATCC 204508 / S288c</strain>
    </source>
</reference>
<reference key="5">
    <citation type="journal article" date="2003" name="Nature">
        <title>Global analysis of protein expression in yeast.</title>
        <authorList>
            <person name="Ghaemmaghami S."/>
            <person name="Huh W.-K."/>
            <person name="Bower K."/>
            <person name="Howson R.W."/>
            <person name="Belle A."/>
            <person name="Dephoure N."/>
            <person name="O'Shea E.K."/>
            <person name="Weissman J.S."/>
        </authorList>
    </citation>
    <scope>LEVEL OF PROTEIN EXPRESSION [LARGE SCALE ANALYSIS]</scope>
</reference>
<feature type="signal peptide" evidence="1">
    <location>
        <begin position="1"/>
        <end position="17"/>
    </location>
</feature>
<feature type="chain" id="PRO_0000021563" description="Killer toxin-resistance protein 5">
    <location>
        <begin position="18"/>
        <end position="1365"/>
    </location>
</feature>
<feature type="region of interest" description="Disordered" evidence="2">
    <location>
        <begin position="1334"/>
        <end position="1365"/>
    </location>
</feature>
<feature type="short sequence motif" description="Prevents secretion from ER">
    <location>
        <begin position="1362"/>
        <end position="1365"/>
    </location>
</feature>
<feature type="compositionally biased region" description="Polar residues" evidence="2">
    <location>
        <begin position="1347"/>
        <end position="1356"/>
    </location>
</feature>
<feature type="glycosylation site" description="N-linked (GlcNAc...) asparagine" evidence="1">
    <location>
        <position position="115"/>
    </location>
</feature>
<feature type="glycosylation site" description="N-linked (GlcNAc...) asparagine" evidence="1">
    <location>
        <position position="228"/>
    </location>
</feature>
<feature type="glycosylation site" description="N-linked (GlcNAc...) asparagine" evidence="1">
    <location>
        <position position="293"/>
    </location>
</feature>
<feature type="glycosylation site" description="N-linked (GlcNAc...) asparagine" evidence="1">
    <location>
        <position position="457"/>
    </location>
</feature>
<feature type="glycosylation site" description="N-linked (GlcNAc...) asparagine" evidence="1">
    <location>
        <position position="519"/>
    </location>
</feature>
<feature type="glycosylation site" description="N-linked (GlcNAc...) asparagine" evidence="1">
    <location>
        <position position="523"/>
    </location>
</feature>
<feature type="glycosylation site" description="N-linked (GlcNAc...) asparagine" evidence="1">
    <location>
        <position position="644"/>
    </location>
</feature>
<feature type="glycosylation site" description="N-linked (GlcNAc...) asparagine" evidence="1">
    <location>
        <position position="870"/>
    </location>
</feature>
<feature type="glycosylation site" description="N-linked (GlcNAc...) asparagine" evidence="1">
    <location>
        <position position="1091"/>
    </location>
</feature>
<feature type="glycosylation site" description="N-linked (GlcNAc...) asparagine" evidence="1">
    <location>
        <position position="1150"/>
    </location>
</feature>
<feature type="glycosylation site" description="N-linked (GlcNAc...) asparagine" evidence="1">
    <location>
        <position position="1195"/>
    </location>
</feature>
<feature type="sequence conflict" description="In Ref. 1; AAA34725." evidence="4" ref="1">
    <location>
        <position position="582"/>
    </location>
</feature>
<feature type="sequence conflict" description="In Ref. 1; AAA34725." evidence="4" ref="1">
    <original>HLDQNEVPETEHFEA</original>
    <variation>ILIKMKCQKQNISKAK</variation>
    <location>
        <begin position="780"/>
        <end position="794"/>
    </location>
</feature>
<accession>P22023</accession>
<accession>D6W331</accession>
<accession>Q12190</accession>
<organism>
    <name type="scientific">Saccharomyces cerevisiae (strain ATCC 204508 / S288c)</name>
    <name type="common">Baker's yeast</name>
    <dbReference type="NCBI Taxonomy" id="559292"/>
    <lineage>
        <taxon>Eukaryota</taxon>
        <taxon>Fungi</taxon>
        <taxon>Dikarya</taxon>
        <taxon>Ascomycota</taxon>
        <taxon>Saccharomycotina</taxon>
        <taxon>Saccharomycetes</taxon>
        <taxon>Saccharomycetales</taxon>
        <taxon>Saccharomycetaceae</taxon>
        <taxon>Saccharomyces</taxon>
    </lineage>
</organism>
<keyword id="KW-0961">Cell wall biogenesis/degradation</keyword>
<keyword id="KW-0256">Endoplasmic reticulum</keyword>
<keyword id="KW-0325">Glycoprotein</keyword>
<keyword id="KW-1185">Reference proteome</keyword>
<keyword id="KW-0732">Signal</keyword>